<organism>
    <name type="scientific">Synechococcus sp. (strain ATCC 27144 / PCC 6301 / SAUG 1402/1)</name>
    <name type="common">Anacystis nidulans</name>
    <dbReference type="NCBI Taxonomy" id="269084"/>
    <lineage>
        <taxon>Bacteria</taxon>
        <taxon>Bacillati</taxon>
        <taxon>Cyanobacteriota</taxon>
        <taxon>Cyanophyceae</taxon>
        <taxon>Synechococcales</taxon>
        <taxon>Synechococcaceae</taxon>
        <taxon>Synechococcus</taxon>
    </lineage>
</organism>
<evidence type="ECO:0000255" key="1">
    <source>
        <dbReference type="HAMAP-Rule" id="MF_01326"/>
    </source>
</evidence>
<evidence type="ECO:0000305" key="2"/>
<gene>
    <name evidence="1" type="primary">rplX</name>
    <name evidence="1" type="synonym">rpl24</name>
    <name type="ordered locus">syc1876_d</name>
</gene>
<name>RL24_SYNP6</name>
<feature type="chain" id="PRO_0000130736" description="Large ribosomal subunit protein uL24">
    <location>
        <begin position="1"/>
        <end position="113"/>
    </location>
</feature>
<protein>
    <recommendedName>
        <fullName evidence="1">Large ribosomal subunit protein uL24</fullName>
    </recommendedName>
    <alternativeName>
        <fullName evidence="2">50S ribosomal protein L24</fullName>
    </alternativeName>
</protein>
<keyword id="KW-0687">Ribonucleoprotein</keyword>
<keyword id="KW-0689">Ribosomal protein</keyword>
<keyword id="KW-0694">RNA-binding</keyword>
<keyword id="KW-0699">rRNA-binding</keyword>
<sequence>MAAQKPVRHSVHVKKGDTVQVIAGKDKGTVGEVLQVFPKTSRVLVKGVNLRTKHVKPRQEGESGQIVVEEASIHSSNVQLYSTTQKVASRVAYTFTEDGRKVRKLKKTGEIID</sequence>
<accession>O24700</accession>
<comment type="function">
    <text evidence="1">One of two assembly initiator proteins, it binds directly to the 5'-end of the 23S rRNA, where it nucleates assembly of the 50S subunit.</text>
</comment>
<comment type="function">
    <text evidence="1">One of the proteins that surrounds the polypeptide exit tunnel on the outside of the subunit.</text>
</comment>
<comment type="subunit">
    <text evidence="1">Part of the 50S ribosomal subunit.</text>
</comment>
<comment type="similarity">
    <text evidence="1">Belongs to the universal ribosomal protein uL24 family.</text>
</comment>
<proteinExistence type="inferred from homology"/>
<dbReference type="EMBL" id="AB000111">
    <property type="protein sequence ID" value="BAA22460.1"/>
    <property type="molecule type" value="Genomic_DNA"/>
</dbReference>
<dbReference type="EMBL" id="AP008231">
    <property type="protein sequence ID" value="BAD80066.1"/>
    <property type="molecule type" value="Genomic_DNA"/>
</dbReference>
<dbReference type="RefSeq" id="WP_011244186.1">
    <property type="nucleotide sequence ID" value="NZ_CP085785.1"/>
</dbReference>
<dbReference type="SMR" id="O24700"/>
<dbReference type="GeneID" id="72431104"/>
<dbReference type="KEGG" id="syc:syc1876_d"/>
<dbReference type="eggNOG" id="COG0198">
    <property type="taxonomic scope" value="Bacteria"/>
</dbReference>
<dbReference type="Proteomes" id="UP000001175">
    <property type="component" value="Chromosome"/>
</dbReference>
<dbReference type="GO" id="GO:1990904">
    <property type="term" value="C:ribonucleoprotein complex"/>
    <property type="evidence" value="ECO:0007669"/>
    <property type="project" value="UniProtKB-KW"/>
</dbReference>
<dbReference type="GO" id="GO:0005840">
    <property type="term" value="C:ribosome"/>
    <property type="evidence" value="ECO:0007669"/>
    <property type="project" value="UniProtKB-KW"/>
</dbReference>
<dbReference type="GO" id="GO:0019843">
    <property type="term" value="F:rRNA binding"/>
    <property type="evidence" value="ECO:0007669"/>
    <property type="project" value="UniProtKB-UniRule"/>
</dbReference>
<dbReference type="GO" id="GO:0003735">
    <property type="term" value="F:structural constituent of ribosome"/>
    <property type="evidence" value="ECO:0007669"/>
    <property type="project" value="InterPro"/>
</dbReference>
<dbReference type="GO" id="GO:0006412">
    <property type="term" value="P:translation"/>
    <property type="evidence" value="ECO:0007669"/>
    <property type="project" value="UniProtKB-UniRule"/>
</dbReference>
<dbReference type="CDD" id="cd06089">
    <property type="entry name" value="KOW_RPL26"/>
    <property type="match status" value="1"/>
</dbReference>
<dbReference type="FunFam" id="2.30.30.30:FF:000004">
    <property type="entry name" value="50S ribosomal protein L24"/>
    <property type="match status" value="1"/>
</dbReference>
<dbReference type="Gene3D" id="2.30.30.30">
    <property type="match status" value="1"/>
</dbReference>
<dbReference type="HAMAP" id="MF_01326_B">
    <property type="entry name" value="Ribosomal_uL24_B"/>
    <property type="match status" value="1"/>
</dbReference>
<dbReference type="InterPro" id="IPR005824">
    <property type="entry name" value="KOW"/>
</dbReference>
<dbReference type="InterPro" id="IPR014722">
    <property type="entry name" value="Rib_uL2_dom2"/>
</dbReference>
<dbReference type="InterPro" id="IPR003256">
    <property type="entry name" value="Ribosomal_uL24"/>
</dbReference>
<dbReference type="InterPro" id="IPR005825">
    <property type="entry name" value="Ribosomal_uL24_CS"/>
</dbReference>
<dbReference type="InterPro" id="IPR041988">
    <property type="entry name" value="Ribosomal_uL24_KOW"/>
</dbReference>
<dbReference type="InterPro" id="IPR008991">
    <property type="entry name" value="Translation_prot_SH3-like_sf"/>
</dbReference>
<dbReference type="NCBIfam" id="TIGR01079">
    <property type="entry name" value="rplX_bact"/>
    <property type="match status" value="1"/>
</dbReference>
<dbReference type="PANTHER" id="PTHR12903">
    <property type="entry name" value="MITOCHONDRIAL RIBOSOMAL PROTEIN L24"/>
    <property type="match status" value="1"/>
</dbReference>
<dbReference type="Pfam" id="PF00467">
    <property type="entry name" value="KOW"/>
    <property type="match status" value="1"/>
</dbReference>
<dbReference type="Pfam" id="PF17136">
    <property type="entry name" value="ribosomal_L24"/>
    <property type="match status" value="1"/>
</dbReference>
<dbReference type="SMART" id="SM00739">
    <property type="entry name" value="KOW"/>
    <property type="match status" value="1"/>
</dbReference>
<dbReference type="SUPFAM" id="SSF50104">
    <property type="entry name" value="Translation proteins SH3-like domain"/>
    <property type="match status" value="1"/>
</dbReference>
<dbReference type="PROSITE" id="PS01108">
    <property type="entry name" value="RIBOSOMAL_L24"/>
    <property type="match status" value="1"/>
</dbReference>
<reference key="1">
    <citation type="journal article" date="1997" name="Gene">
        <title>Organization of a large gene cluster encoding ribosomal proteins in the cyanobacterium Synechococcus sp. strain PCC 6301: comparison of gene clusters among cyanobacteria, eubacteria and chloroplast genomes.</title>
        <authorList>
            <person name="Sugita M."/>
            <person name="Sugishita H."/>
            <person name="Fujishiro T."/>
            <person name="Tsuboi M."/>
            <person name="Sugita C."/>
            <person name="Endo T."/>
            <person name="Sugiura M."/>
        </authorList>
    </citation>
    <scope>NUCLEOTIDE SEQUENCE [GENOMIC DNA]</scope>
</reference>
<reference key="2">
    <citation type="journal article" date="2007" name="Photosyn. Res.">
        <title>Complete nucleotide sequence of the freshwater unicellular cyanobacterium Synechococcus elongatus PCC 6301 chromosome: gene content and organization.</title>
        <authorList>
            <person name="Sugita C."/>
            <person name="Ogata K."/>
            <person name="Shikata M."/>
            <person name="Jikuya H."/>
            <person name="Takano J."/>
            <person name="Furumichi M."/>
            <person name="Kanehisa M."/>
            <person name="Omata T."/>
            <person name="Sugiura M."/>
            <person name="Sugita M."/>
        </authorList>
    </citation>
    <scope>NUCLEOTIDE SEQUENCE [LARGE SCALE GENOMIC DNA]</scope>
    <source>
        <strain>ATCC 27144 / PCC 6301 / SAUG 1402/1</strain>
    </source>
</reference>